<feature type="chain" id="PRO_0000166616" description="Phosphoenolpyruvate carboxylase">
    <location>
        <begin position="1"/>
        <end position="985"/>
    </location>
</feature>
<feature type="region of interest" description="Disordered" evidence="2">
    <location>
        <begin position="1"/>
        <end position="55"/>
    </location>
</feature>
<feature type="compositionally biased region" description="Low complexity" evidence="2">
    <location>
        <begin position="1"/>
        <end position="17"/>
    </location>
</feature>
<feature type="active site" evidence="1">
    <location>
        <position position="193"/>
    </location>
</feature>
<feature type="active site" evidence="1">
    <location>
        <position position="634"/>
    </location>
</feature>
<sequence length="985" mass="108869">MTQSAARRASSRATPARKTPPAPASQTPAPSPGGTAGTALGPTSRRSSGSAAAKDQPLKEDIRFLGRLLGDVLREQEGAAAFETVETIRQTAVRFRRDGDRQAEQELDRLLKTLSRDQTTSVVRAFSYFSHLANIAEDQHHNRRRRVHALAGSSPQPGSLLRALLSAADEGLSGDALRRFFDAALIVPVLTAHPTEVQRKSILDAQREIARLLAERDAPLTVRERERNVTLLRAHVTKLWQTRMLRTTRLMVADEIENALSYYQTTFLREIPALYRELEEDVATVFPRRGARGEPAPLPAFFQMGSWIGGDRDGNPFVTAQTLRHAAQRQASVILTWYLDEIHALGAELSMSTLLVDVSADLLALAERSPDHSEHRADEPYRRALIGVYARLAATCRELTGEDAGRHAVGPAPAYTRAEELRADLQIVIDSLAAHHGEALADARLASLARAIDVFGFHLASIDLRQVSDVHEATVAELLRVAGVEGAYAALSEADKRTLLLRELQQPRLLTLPFHTYSETTASELDIFRAAREVRARYGSRIVRNYIISHTETLSDLLEVMLLQKEAGMFRHGTNGSGGAGLDVMVIPLFETIEDLRNAPQIMGELLALPGFDAVLAAQGNEQEVMLGYSDSNKDGGFLTSNWELYKTELALVELFERKGVRLRLFHGRGGTVGRGGGPTYQAILSQPPGTVNGQIRLTEQGEIISSKFANPEIGRRNLETIVAATLEATLLPTRNRPKGLEEFEAAMQALSDHAFSAYRHLVYETPGFKDYFFATTPITEIADLNLGSRPASRKLMDRKQRRIEDLRAIPWGFSWGQCRLLLPGWFGFGSAVQRWLDEAGSAKAKAARLATLKRMHKQWPFFANLLSNMDMVLSKADLNVASRYAQLCEDRKLRNAVFSRISAEFTLTEQVLGAITGQSERLADNPLLARSIKNRFPYLDPLNHLQVELLKRFRSGKAGSNDARVRRGIHLSINGIAAGLRNSG</sequence>
<dbReference type="EC" id="4.1.1.31" evidence="1"/>
<dbReference type="EMBL" id="AL646052">
    <property type="protein sequence ID" value="CAD16065.1"/>
    <property type="molecule type" value="Genomic_DNA"/>
</dbReference>
<dbReference type="RefSeq" id="WP_011002281.1">
    <property type="nucleotide sequence ID" value="NC_003295.1"/>
</dbReference>
<dbReference type="SMR" id="Q8XWW2"/>
<dbReference type="STRING" id="267608.RSc2358"/>
<dbReference type="EnsemblBacteria" id="CAD16065">
    <property type="protein sequence ID" value="CAD16065"/>
    <property type="gene ID" value="RSc2358"/>
</dbReference>
<dbReference type="KEGG" id="rso:RSc2358"/>
<dbReference type="PATRIC" id="fig|267608.8.peg.2397"/>
<dbReference type="eggNOG" id="COG2352">
    <property type="taxonomic scope" value="Bacteria"/>
</dbReference>
<dbReference type="HOGENOM" id="CLU_006557_2_0_4"/>
<dbReference type="Proteomes" id="UP000001436">
    <property type="component" value="Chromosome"/>
</dbReference>
<dbReference type="GO" id="GO:0005829">
    <property type="term" value="C:cytosol"/>
    <property type="evidence" value="ECO:0007669"/>
    <property type="project" value="TreeGrafter"/>
</dbReference>
<dbReference type="GO" id="GO:0000287">
    <property type="term" value="F:magnesium ion binding"/>
    <property type="evidence" value="ECO:0007669"/>
    <property type="project" value="UniProtKB-UniRule"/>
</dbReference>
<dbReference type="GO" id="GO:0008964">
    <property type="term" value="F:phosphoenolpyruvate carboxylase activity"/>
    <property type="evidence" value="ECO:0007669"/>
    <property type="project" value="UniProtKB-UniRule"/>
</dbReference>
<dbReference type="GO" id="GO:0015977">
    <property type="term" value="P:carbon fixation"/>
    <property type="evidence" value="ECO:0007669"/>
    <property type="project" value="UniProtKB-UniRule"/>
</dbReference>
<dbReference type="GO" id="GO:0006107">
    <property type="term" value="P:oxaloacetate metabolic process"/>
    <property type="evidence" value="ECO:0007669"/>
    <property type="project" value="UniProtKB-UniRule"/>
</dbReference>
<dbReference type="GO" id="GO:0006099">
    <property type="term" value="P:tricarboxylic acid cycle"/>
    <property type="evidence" value="ECO:0007669"/>
    <property type="project" value="InterPro"/>
</dbReference>
<dbReference type="Gene3D" id="1.20.1440.90">
    <property type="entry name" value="Phosphoenolpyruvate/pyruvate domain"/>
    <property type="match status" value="1"/>
</dbReference>
<dbReference type="HAMAP" id="MF_00595">
    <property type="entry name" value="PEPcase_type1"/>
    <property type="match status" value="1"/>
</dbReference>
<dbReference type="InterPro" id="IPR021135">
    <property type="entry name" value="PEP_COase"/>
</dbReference>
<dbReference type="InterPro" id="IPR022805">
    <property type="entry name" value="PEP_COase_bac/pln-type"/>
</dbReference>
<dbReference type="InterPro" id="IPR018129">
    <property type="entry name" value="PEP_COase_Lys_AS"/>
</dbReference>
<dbReference type="InterPro" id="IPR033129">
    <property type="entry name" value="PEPCASE_His_AS"/>
</dbReference>
<dbReference type="InterPro" id="IPR015813">
    <property type="entry name" value="Pyrv/PenolPyrv_kinase-like_dom"/>
</dbReference>
<dbReference type="NCBIfam" id="NF000584">
    <property type="entry name" value="PRK00009.1"/>
    <property type="match status" value="1"/>
</dbReference>
<dbReference type="PANTHER" id="PTHR30523">
    <property type="entry name" value="PHOSPHOENOLPYRUVATE CARBOXYLASE"/>
    <property type="match status" value="1"/>
</dbReference>
<dbReference type="PANTHER" id="PTHR30523:SF6">
    <property type="entry name" value="PHOSPHOENOLPYRUVATE CARBOXYLASE"/>
    <property type="match status" value="1"/>
</dbReference>
<dbReference type="Pfam" id="PF00311">
    <property type="entry name" value="PEPcase"/>
    <property type="match status" value="1"/>
</dbReference>
<dbReference type="PRINTS" id="PR00150">
    <property type="entry name" value="PEPCARBXLASE"/>
</dbReference>
<dbReference type="SUPFAM" id="SSF51621">
    <property type="entry name" value="Phosphoenolpyruvate/pyruvate domain"/>
    <property type="match status" value="1"/>
</dbReference>
<dbReference type="PROSITE" id="PS00781">
    <property type="entry name" value="PEPCASE_1"/>
    <property type="match status" value="1"/>
</dbReference>
<dbReference type="PROSITE" id="PS00393">
    <property type="entry name" value="PEPCASE_2"/>
    <property type="match status" value="1"/>
</dbReference>
<name>CAPP_RALN1</name>
<keyword id="KW-0120">Carbon dioxide fixation</keyword>
<keyword id="KW-0456">Lyase</keyword>
<keyword id="KW-0460">Magnesium</keyword>
<keyword id="KW-1185">Reference proteome</keyword>
<comment type="function">
    <text evidence="1">Forms oxaloacetate, a four-carbon dicarboxylic acid source for the tricarboxylic acid cycle.</text>
</comment>
<comment type="catalytic activity">
    <reaction evidence="1">
        <text>oxaloacetate + phosphate = phosphoenolpyruvate + hydrogencarbonate</text>
        <dbReference type="Rhea" id="RHEA:28370"/>
        <dbReference type="ChEBI" id="CHEBI:16452"/>
        <dbReference type="ChEBI" id="CHEBI:17544"/>
        <dbReference type="ChEBI" id="CHEBI:43474"/>
        <dbReference type="ChEBI" id="CHEBI:58702"/>
        <dbReference type="EC" id="4.1.1.31"/>
    </reaction>
</comment>
<comment type="cofactor">
    <cofactor evidence="1">
        <name>Mg(2+)</name>
        <dbReference type="ChEBI" id="CHEBI:18420"/>
    </cofactor>
</comment>
<comment type="similarity">
    <text evidence="1">Belongs to the PEPCase type 1 family.</text>
</comment>
<organism>
    <name type="scientific">Ralstonia nicotianae (strain ATCC BAA-1114 / GMI1000)</name>
    <name type="common">Ralstonia solanacearum</name>
    <dbReference type="NCBI Taxonomy" id="267608"/>
    <lineage>
        <taxon>Bacteria</taxon>
        <taxon>Pseudomonadati</taxon>
        <taxon>Pseudomonadota</taxon>
        <taxon>Betaproteobacteria</taxon>
        <taxon>Burkholderiales</taxon>
        <taxon>Burkholderiaceae</taxon>
        <taxon>Ralstonia</taxon>
        <taxon>Ralstonia solanacearum species complex</taxon>
    </lineage>
</organism>
<accession>Q8XWW2</accession>
<protein>
    <recommendedName>
        <fullName evidence="1">Phosphoenolpyruvate carboxylase</fullName>
        <shortName evidence="1">PEPC</shortName>
        <shortName evidence="1">PEPCase</shortName>
        <ecNumber evidence="1">4.1.1.31</ecNumber>
    </recommendedName>
</protein>
<gene>
    <name evidence="1" type="primary">ppc</name>
    <name type="ordered locus">RSc2358</name>
    <name type="ORF">RS01188</name>
</gene>
<proteinExistence type="inferred from homology"/>
<reference key="1">
    <citation type="journal article" date="2002" name="Nature">
        <title>Genome sequence of the plant pathogen Ralstonia solanacearum.</title>
        <authorList>
            <person name="Salanoubat M."/>
            <person name="Genin S."/>
            <person name="Artiguenave F."/>
            <person name="Gouzy J."/>
            <person name="Mangenot S."/>
            <person name="Arlat M."/>
            <person name="Billault A."/>
            <person name="Brottier P."/>
            <person name="Camus J.-C."/>
            <person name="Cattolico L."/>
            <person name="Chandler M."/>
            <person name="Choisne N."/>
            <person name="Claudel-Renard C."/>
            <person name="Cunnac S."/>
            <person name="Demange N."/>
            <person name="Gaspin C."/>
            <person name="Lavie M."/>
            <person name="Moisan A."/>
            <person name="Robert C."/>
            <person name="Saurin W."/>
            <person name="Schiex T."/>
            <person name="Siguier P."/>
            <person name="Thebault P."/>
            <person name="Whalen M."/>
            <person name="Wincker P."/>
            <person name="Levy M."/>
            <person name="Weissenbach J."/>
            <person name="Boucher C.A."/>
        </authorList>
    </citation>
    <scope>NUCLEOTIDE SEQUENCE [LARGE SCALE GENOMIC DNA]</scope>
    <source>
        <strain>ATCC BAA-1114 / GMI1000</strain>
    </source>
</reference>
<evidence type="ECO:0000255" key="1">
    <source>
        <dbReference type="HAMAP-Rule" id="MF_00595"/>
    </source>
</evidence>
<evidence type="ECO:0000256" key="2">
    <source>
        <dbReference type="SAM" id="MobiDB-lite"/>
    </source>
</evidence>